<name>OUIB_DROME</name>
<comment type="function">
    <text evidence="3">Transcription factor required for ecdysteroid production in the prothoracic gland by activating transcription of the ecdysteroid biosynthesis gene spok. Binds to the 5'-AGCTTTATTATTTAG-3' DNA sequence in the spok enhancer region.</text>
</comment>
<comment type="subcellular location">
    <subcellularLocation>
        <location evidence="6">Nucleus</location>
    </subcellularLocation>
</comment>
<comment type="tissue specificity">
    <text evidence="3">Expressed predominantly in the prothoracic gland during embryonic and larval development.</text>
</comment>
<comment type="developmental stage">
    <text evidence="3">During larval development, expression is low during early stages and gradually becomes higher in late stages.</text>
</comment>
<comment type="disruption phenotype">
    <text evidence="3">Larval developmental arrest due to ecdysteroid deficiency.</text>
</comment>
<comment type="miscellaneous">
    <text evidence="4">The name 'ouija board' derives from the instrument used for calling ghosts and is based on the fact that mutants cannot induce expression of the ecdysteroid biosynthesis protein spookier.</text>
</comment>
<comment type="sequence caution" evidence="5">
    <conflict type="erroneous initiation">
        <sequence resource="EMBL-CDS" id="ABI34225"/>
    </conflict>
    <text>Extended N-terminus.</text>
</comment>
<gene>
    <name evidence="4 8" type="primary">Ouib</name>
    <name evidence="8" type="ORF">CG11762</name>
</gene>
<organism>
    <name type="scientific">Drosophila melanogaster</name>
    <name type="common">Fruit fly</name>
    <dbReference type="NCBI Taxonomy" id="7227"/>
    <lineage>
        <taxon>Eukaryota</taxon>
        <taxon>Metazoa</taxon>
        <taxon>Ecdysozoa</taxon>
        <taxon>Arthropoda</taxon>
        <taxon>Hexapoda</taxon>
        <taxon>Insecta</taxon>
        <taxon>Pterygota</taxon>
        <taxon>Neoptera</taxon>
        <taxon>Endopterygota</taxon>
        <taxon>Diptera</taxon>
        <taxon>Brachycera</taxon>
        <taxon>Muscomorpha</taxon>
        <taxon>Ephydroidea</taxon>
        <taxon>Drosophilidae</taxon>
        <taxon>Drosophila</taxon>
        <taxon>Sophophora</taxon>
    </lineage>
</organism>
<feature type="chain" id="PRO_0000436010" description="Transcription factor Ouib" evidence="5">
    <location>
        <begin position="1"/>
        <end position="312"/>
    </location>
</feature>
<feature type="domain" description="ZAD" evidence="2">
    <location>
        <begin position="4"/>
        <end position="79"/>
    </location>
</feature>
<feature type="zinc finger region" description="C2H2-type 1" evidence="1">
    <location>
        <begin position="167"/>
        <end position="189"/>
    </location>
</feature>
<feature type="zinc finger region" description="C2H2-type 2" evidence="1">
    <location>
        <begin position="195"/>
        <end position="217"/>
    </location>
</feature>
<feature type="zinc finger region" description="C2H2-type 3" evidence="1">
    <location>
        <begin position="223"/>
        <end position="245"/>
    </location>
</feature>
<feature type="zinc finger region" description="C2H2-type 4" evidence="1">
    <location>
        <begin position="251"/>
        <end position="273"/>
    </location>
</feature>
<feature type="zinc finger region" description="C2H2-type 5" evidence="1">
    <location>
        <begin position="279"/>
        <end position="303"/>
    </location>
</feature>
<feature type="binding site" evidence="2">
    <location>
        <position position="6"/>
    </location>
    <ligand>
        <name>Zn(2+)</name>
        <dbReference type="ChEBI" id="CHEBI:29105"/>
    </ligand>
</feature>
<feature type="binding site" evidence="2">
    <location>
        <position position="9"/>
    </location>
    <ligand>
        <name>Zn(2+)</name>
        <dbReference type="ChEBI" id="CHEBI:29105"/>
    </ligand>
</feature>
<feature type="binding site" evidence="2">
    <location>
        <position position="52"/>
    </location>
    <ligand>
        <name>Zn(2+)</name>
        <dbReference type="ChEBI" id="CHEBI:29105"/>
    </ligand>
</feature>
<feature type="binding site" evidence="2">
    <location>
        <position position="55"/>
    </location>
    <ligand>
        <name>Zn(2+)</name>
        <dbReference type="ChEBI" id="CHEBI:29105"/>
    </ligand>
</feature>
<feature type="sequence conflict" description="In Ref. 3; ABI34225." evidence="5" ref="3">
    <original>C</original>
    <variation>Y</variation>
    <location>
        <position position="6"/>
    </location>
</feature>
<accession>Q9VHM6</accession>
<accession>C1C5A4</accession>
<accession>Q0IGS6</accession>
<proteinExistence type="evidence at transcript level"/>
<evidence type="ECO:0000255" key="1">
    <source>
        <dbReference type="PROSITE-ProRule" id="PRU00042"/>
    </source>
</evidence>
<evidence type="ECO:0000255" key="2">
    <source>
        <dbReference type="PROSITE-ProRule" id="PRU01263"/>
    </source>
</evidence>
<evidence type="ECO:0000269" key="3">
    <source>
    </source>
</evidence>
<evidence type="ECO:0000303" key="4">
    <source>
    </source>
</evidence>
<evidence type="ECO:0000305" key="5"/>
<evidence type="ECO:0000305" key="6">
    <source>
    </source>
</evidence>
<evidence type="ECO:0000312" key="7">
    <source>
        <dbReference type="EMBL" id="ACO72870.1"/>
    </source>
</evidence>
<evidence type="ECO:0000312" key="8">
    <source>
        <dbReference type="FlyBase" id="FBgn0037618"/>
    </source>
</evidence>
<evidence type="ECO:0000312" key="9">
    <source>
        <dbReference type="Proteomes" id="UP000000803"/>
    </source>
</evidence>
<protein>
    <recommendedName>
        <fullName evidence="6">Transcription factor Ouib</fullName>
    </recommendedName>
    <alternativeName>
        <fullName evidence="4">Protein ouija board</fullName>
    </alternativeName>
</protein>
<sequence>MLNIVCRVCGRQKICEKSLNLFDLVNRKYLKHLHMISGLRLVDLDDVPGFMCLCCQAELRSALAFRKLCIKTQTKWLTIEDDSSSGDEDTNDNSELESEKCAFSDFGKKKEGELVEETFQVLIEEEPMDKTLNRDAKAQLREDGIDEKCVPSQKIIKVSTKLDDQIYICELCGTHATSKPTFQRHMRKHRGERPFGCKDCDARFLSAGELRAHHRVHTGEQPFACRFCEKRYVSYMGRLIHERTHTNDRPYVCEECGKKFTTAYVLKNHMVIHTGERNFRCDICDRSFQRKAHLVTHTRSMMHLQNVKKQKS</sequence>
<reference evidence="9" key="1">
    <citation type="journal article" date="2000" name="Science">
        <title>The genome sequence of Drosophila melanogaster.</title>
        <authorList>
            <person name="Adams M.D."/>
            <person name="Celniker S.E."/>
            <person name="Holt R.A."/>
            <person name="Evans C.A."/>
            <person name="Gocayne J.D."/>
            <person name="Amanatides P.G."/>
            <person name="Scherer S.E."/>
            <person name="Li P.W."/>
            <person name="Hoskins R.A."/>
            <person name="Galle R.F."/>
            <person name="George R.A."/>
            <person name="Lewis S.E."/>
            <person name="Richards S."/>
            <person name="Ashburner M."/>
            <person name="Henderson S.N."/>
            <person name="Sutton G.G."/>
            <person name="Wortman J.R."/>
            <person name="Yandell M.D."/>
            <person name="Zhang Q."/>
            <person name="Chen L.X."/>
            <person name="Brandon R.C."/>
            <person name="Rogers Y.-H.C."/>
            <person name="Blazej R.G."/>
            <person name="Champe M."/>
            <person name="Pfeiffer B.D."/>
            <person name="Wan K.H."/>
            <person name="Doyle C."/>
            <person name="Baxter E.G."/>
            <person name="Helt G."/>
            <person name="Nelson C.R."/>
            <person name="Miklos G.L.G."/>
            <person name="Abril J.F."/>
            <person name="Agbayani A."/>
            <person name="An H.-J."/>
            <person name="Andrews-Pfannkoch C."/>
            <person name="Baldwin D."/>
            <person name="Ballew R.M."/>
            <person name="Basu A."/>
            <person name="Baxendale J."/>
            <person name="Bayraktaroglu L."/>
            <person name="Beasley E.M."/>
            <person name="Beeson K.Y."/>
            <person name="Benos P.V."/>
            <person name="Berman B.P."/>
            <person name="Bhandari D."/>
            <person name="Bolshakov S."/>
            <person name="Borkova D."/>
            <person name="Botchan M.R."/>
            <person name="Bouck J."/>
            <person name="Brokstein P."/>
            <person name="Brottier P."/>
            <person name="Burtis K.C."/>
            <person name="Busam D.A."/>
            <person name="Butler H."/>
            <person name="Cadieu E."/>
            <person name="Center A."/>
            <person name="Chandra I."/>
            <person name="Cherry J.M."/>
            <person name="Cawley S."/>
            <person name="Dahlke C."/>
            <person name="Davenport L.B."/>
            <person name="Davies P."/>
            <person name="de Pablos B."/>
            <person name="Delcher A."/>
            <person name="Deng Z."/>
            <person name="Mays A.D."/>
            <person name="Dew I."/>
            <person name="Dietz S.M."/>
            <person name="Dodson K."/>
            <person name="Doup L.E."/>
            <person name="Downes M."/>
            <person name="Dugan-Rocha S."/>
            <person name="Dunkov B.C."/>
            <person name="Dunn P."/>
            <person name="Durbin K.J."/>
            <person name="Evangelista C.C."/>
            <person name="Ferraz C."/>
            <person name="Ferriera S."/>
            <person name="Fleischmann W."/>
            <person name="Fosler C."/>
            <person name="Gabrielian A.E."/>
            <person name="Garg N.S."/>
            <person name="Gelbart W.M."/>
            <person name="Glasser K."/>
            <person name="Glodek A."/>
            <person name="Gong F."/>
            <person name="Gorrell J.H."/>
            <person name="Gu Z."/>
            <person name="Guan P."/>
            <person name="Harris M."/>
            <person name="Harris N.L."/>
            <person name="Harvey D.A."/>
            <person name="Heiman T.J."/>
            <person name="Hernandez J.R."/>
            <person name="Houck J."/>
            <person name="Hostin D."/>
            <person name="Houston K.A."/>
            <person name="Howland T.J."/>
            <person name="Wei M.-H."/>
            <person name="Ibegwam C."/>
            <person name="Jalali M."/>
            <person name="Kalush F."/>
            <person name="Karpen G.H."/>
            <person name="Ke Z."/>
            <person name="Kennison J.A."/>
            <person name="Ketchum K.A."/>
            <person name="Kimmel B.E."/>
            <person name="Kodira C.D."/>
            <person name="Kraft C.L."/>
            <person name="Kravitz S."/>
            <person name="Kulp D."/>
            <person name="Lai Z."/>
            <person name="Lasko P."/>
            <person name="Lei Y."/>
            <person name="Levitsky A.A."/>
            <person name="Li J.H."/>
            <person name="Li Z."/>
            <person name="Liang Y."/>
            <person name="Lin X."/>
            <person name="Liu X."/>
            <person name="Mattei B."/>
            <person name="McIntosh T.C."/>
            <person name="McLeod M.P."/>
            <person name="McPherson D."/>
            <person name="Merkulov G."/>
            <person name="Milshina N.V."/>
            <person name="Mobarry C."/>
            <person name="Morris J."/>
            <person name="Moshrefi A."/>
            <person name="Mount S.M."/>
            <person name="Moy M."/>
            <person name="Murphy B."/>
            <person name="Murphy L."/>
            <person name="Muzny D.M."/>
            <person name="Nelson D.L."/>
            <person name="Nelson D.R."/>
            <person name="Nelson K.A."/>
            <person name="Nixon K."/>
            <person name="Nusskern D.R."/>
            <person name="Pacleb J.M."/>
            <person name="Palazzolo M."/>
            <person name="Pittman G.S."/>
            <person name="Pan S."/>
            <person name="Pollard J."/>
            <person name="Puri V."/>
            <person name="Reese M.G."/>
            <person name="Reinert K."/>
            <person name="Remington K."/>
            <person name="Saunders R.D.C."/>
            <person name="Scheeler F."/>
            <person name="Shen H."/>
            <person name="Shue B.C."/>
            <person name="Siden-Kiamos I."/>
            <person name="Simpson M."/>
            <person name="Skupski M.P."/>
            <person name="Smith T.J."/>
            <person name="Spier E."/>
            <person name="Spradling A.C."/>
            <person name="Stapleton M."/>
            <person name="Strong R."/>
            <person name="Sun E."/>
            <person name="Svirskas R."/>
            <person name="Tector C."/>
            <person name="Turner R."/>
            <person name="Venter E."/>
            <person name="Wang A.H."/>
            <person name="Wang X."/>
            <person name="Wang Z.-Y."/>
            <person name="Wassarman D.A."/>
            <person name="Weinstock G.M."/>
            <person name="Weissenbach J."/>
            <person name="Williams S.M."/>
            <person name="Woodage T."/>
            <person name="Worley K.C."/>
            <person name="Wu D."/>
            <person name="Yang S."/>
            <person name="Yao Q.A."/>
            <person name="Ye J."/>
            <person name="Yeh R.-F."/>
            <person name="Zaveri J.S."/>
            <person name="Zhan M."/>
            <person name="Zhang G."/>
            <person name="Zhao Q."/>
            <person name="Zheng L."/>
            <person name="Zheng X.H."/>
            <person name="Zhong F.N."/>
            <person name="Zhong W."/>
            <person name="Zhou X."/>
            <person name="Zhu S.C."/>
            <person name="Zhu X."/>
            <person name="Smith H.O."/>
            <person name="Gibbs R.A."/>
            <person name="Myers E.W."/>
            <person name="Rubin G.M."/>
            <person name="Venter J.C."/>
        </authorList>
    </citation>
    <scope>NUCLEOTIDE SEQUENCE [LARGE SCALE GENOMIC DNA]</scope>
    <source>
        <strain evidence="9">Berkeley</strain>
    </source>
</reference>
<reference evidence="9" key="2">
    <citation type="journal article" date="2002" name="Genome Biol.">
        <title>Annotation of the Drosophila melanogaster euchromatic genome: a systematic review.</title>
        <authorList>
            <person name="Misra S."/>
            <person name="Crosby M.A."/>
            <person name="Mungall C.J."/>
            <person name="Matthews B.B."/>
            <person name="Campbell K.S."/>
            <person name="Hradecky P."/>
            <person name="Huang Y."/>
            <person name="Kaminker J.S."/>
            <person name="Millburn G.H."/>
            <person name="Prochnik S.E."/>
            <person name="Smith C.D."/>
            <person name="Tupy J.L."/>
            <person name="Whitfield E.J."/>
            <person name="Bayraktaroglu L."/>
            <person name="Berman B.P."/>
            <person name="Bettencourt B.R."/>
            <person name="Celniker S.E."/>
            <person name="de Grey A.D.N.J."/>
            <person name="Drysdale R.A."/>
            <person name="Harris N.L."/>
            <person name="Richter J."/>
            <person name="Russo S."/>
            <person name="Schroeder A.J."/>
            <person name="Shu S.Q."/>
            <person name="Stapleton M."/>
            <person name="Yamada C."/>
            <person name="Ashburner M."/>
            <person name="Gelbart W.M."/>
            <person name="Rubin G.M."/>
            <person name="Lewis S.E."/>
        </authorList>
    </citation>
    <scope>GENOME REANNOTATION</scope>
    <source>
        <strain evidence="9">Berkeley</strain>
    </source>
</reference>
<reference evidence="7" key="3">
    <citation type="submission" date="2009-05" db="EMBL/GenBank/DDBJ databases">
        <authorList>
            <person name="Carlson J."/>
            <person name="Booth B."/>
            <person name="Frise E."/>
            <person name="Sandler J."/>
            <person name="Wan K."/>
            <person name="Yu C."/>
            <person name="Celniker S."/>
        </authorList>
    </citation>
    <scope>NUCLEOTIDE SEQUENCE [LARGE SCALE MRNA]</scope>
</reference>
<reference evidence="5" key="4">
    <citation type="journal article" date="2015" name="PLoS Genet.">
        <title>The Drosophila zinc finger transcription factor Ouija Board controls ecdysteroid biosynthesis through specific regulation of spookier.</title>
        <authorList>
            <person name="Komura-Kawa T."/>
            <person name="Hirota K."/>
            <person name="Shimada-Niwa Y."/>
            <person name="Yamauchi R."/>
            <person name="Shimell M."/>
            <person name="Shinoda T."/>
            <person name="Fukamizu A."/>
            <person name="O'Connor M.B."/>
            <person name="Niwa R."/>
        </authorList>
    </citation>
    <scope>FUNCTION</scope>
    <scope>TISSUE SPECIFICITY</scope>
    <scope>DEVELOPMENTAL STAGE</scope>
    <scope>DISRUPTION PHENOTYPE</scope>
</reference>
<keyword id="KW-0010">Activator</keyword>
<keyword id="KW-0238">DNA-binding</keyword>
<keyword id="KW-0479">Metal-binding</keyword>
<keyword id="KW-0539">Nucleus</keyword>
<keyword id="KW-1185">Reference proteome</keyword>
<keyword id="KW-0677">Repeat</keyword>
<keyword id="KW-0804">Transcription</keyword>
<keyword id="KW-0805">Transcription regulation</keyword>
<keyword id="KW-0862">Zinc</keyword>
<keyword id="KW-0863">Zinc-finger</keyword>
<dbReference type="EMBL" id="AE014297">
    <property type="protein sequence ID" value="AAF54277.2"/>
    <property type="molecule type" value="Genomic_DNA"/>
</dbReference>
<dbReference type="EMBL" id="BT028844">
    <property type="protein sequence ID" value="ABI34225.3"/>
    <property type="status" value="ALT_INIT"/>
    <property type="molecule type" value="mRNA"/>
</dbReference>
<dbReference type="EMBL" id="BT082033">
    <property type="protein sequence ID" value="ACO72870.1"/>
    <property type="molecule type" value="mRNA"/>
</dbReference>
<dbReference type="EMBL" id="BT082125">
    <property type="protein sequence ID" value="ACQ57832.1"/>
    <property type="molecule type" value="mRNA"/>
</dbReference>
<dbReference type="RefSeq" id="NP_649822.2">
    <property type="nucleotide sequence ID" value="NM_141565.4"/>
</dbReference>
<dbReference type="SMR" id="Q9VHM6"/>
<dbReference type="FunCoup" id="Q9VHM6">
    <property type="interactions" value="115"/>
</dbReference>
<dbReference type="IntAct" id="Q9VHM6">
    <property type="interactions" value="1"/>
</dbReference>
<dbReference type="STRING" id="7227.FBpp0081395"/>
<dbReference type="PaxDb" id="7227-FBpp0081395"/>
<dbReference type="DNASU" id="41039"/>
<dbReference type="EnsemblMetazoa" id="FBtr0081912">
    <property type="protein sequence ID" value="FBpp0081395"/>
    <property type="gene ID" value="FBgn0037618"/>
</dbReference>
<dbReference type="GeneID" id="41039"/>
<dbReference type="KEGG" id="dme:Dmel_CG11762"/>
<dbReference type="UCSC" id="CG11762-RA">
    <property type="organism name" value="d. melanogaster"/>
</dbReference>
<dbReference type="AGR" id="FB:FBgn0037618"/>
<dbReference type="CTD" id="41039"/>
<dbReference type="FlyBase" id="FBgn0037618">
    <property type="gene designation" value="ouib"/>
</dbReference>
<dbReference type="VEuPathDB" id="VectorBase:FBgn0037618"/>
<dbReference type="eggNOG" id="KOG1721">
    <property type="taxonomic scope" value="Eukaryota"/>
</dbReference>
<dbReference type="GeneTree" id="ENSGT00390000000546"/>
<dbReference type="HOGENOM" id="CLU_002678_94_3_1"/>
<dbReference type="InParanoid" id="Q9VHM6"/>
<dbReference type="OMA" id="CCQSDLK"/>
<dbReference type="OrthoDB" id="427030at2759"/>
<dbReference type="PhylomeDB" id="Q9VHM6"/>
<dbReference type="BioGRID-ORCS" id="41039">
    <property type="hits" value="0 hits in 1 CRISPR screen"/>
</dbReference>
<dbReference type="GenomeRNAi" id="41039"/>
<dbReference type="PRO" id="PR:Q9VHM6"/>
<dbReference type="Proteomes" id="UP000000803">
    <property type="component" value="Chromosome 3R"/>
</dbReference>
<dbReference type="Bgee" id="FBgn0037618">
    <property type="expression patterns" value="Expressed in adult Malpighian tubule Type I cell (Drosophila) in Malpighian tubule and 8 other cell types or tissues"/>
</dbReference>
<dbReference type="GO" id="GO:0005634">
    <property type="term" value="C:nucleus"/>
    <property type="evidence" value="ECO:0000305"/>
    <property type="project" value="UniProtKB"/>
</dbReference>
<dbReference type="GO" id="GO:0003700">
    <property type="term" value="F:DNA-binding transcription factor activity"/>
    <property type="evidence" value="ECO:0000314"/>
    <property type="project" value="FlyBase"/>
</dbReference>
<dbReference type="GO" id="GO:0000981">
    <property type="term" value="F:DNA-binding transcription factor activity, RNA polymerase II-specific"/>
    <property type="evidence" value="ECO:0000318"/>
    <property type="project" value="GO_Central"/>
</dbReference>
<dbReference type="GO" id="GO:0000978">
    <property type="term" value="F:RNA polymerase II cis-regulatory region sequence-specific DNA binding"/>
    <property type="evidence" value="ECO:0000318"/>
    <property type="project" value="GO_Central"/>
</dbReference>
<dbReference type="GO" id="GO:0008270">
    <property type="term" value="F:zinc ion binding"/>
    <property type="evidence" value="ECO:0007669"/>
    <property type="project" value="UniProtKB-KW"/>
</dbReference>
<dbReference type="GO" id="GO:0002168">
    <property type="term" value="P:instar larval development"/>
    <property type="evidence" value="ECO:0000315"/>
    <property type="project" value="FlyBase"/>
</dbReference>
<dbReference type="GO" id="GO:0045998">
    <property type="term" value="P:positive regulation of ecdysteroid biosynthetic process"/>
    <property type="evidence" value="ECO:0000315"/>
    <property type="project" value="UniProtKB"/>
</dbReference>
<dbReference type="GO" id="GO:0045944">
    <property type="term" value="P:positive regulation of transcription by RNA polymerase II"/>
    <property type="evidence" value="ECO:0000315"/>
    <property type="project" value="UniProtKB"/>
</dbReference>
<dbReference type="GO" id="GO:0006355">
    <property type="term" value="P:regulation of DNA-templated transcription"/>
    <property type="evidence" value="ECO:0000314"/>
    <property type="project" value="FlyBase"/>
</dbReference>
<dbReference type="FunFam" id="3.30.160.60:FF:001557">
    <property type="entry name" value="Transcription factor E4F1"/>
    <property type="match status" value="1"/>
</dbReference>
<dbReference type="FunFam" id="3.30.160.60:FF:002343">
    <property type="entry name" value="Zinc finger protein 33A"/>
    <property type="match status" value="1"/>
</dbReference>
<dbReference type="FunFam" id="3.30.160.60:FF:000624">
    <property type="entry name" value="zinc finger protein 697"/>
    <property type="match status" value="1"/>
</dbReference>
<dbReference type="Gene3D" id="3.30.160.60">
    <property type="entry name" value="Classic Zinc Finger"/>
    <property type="match status" value="5"/>
</dbReference>
<dbReference type="InterPro" id="IPR012934">
    <property type="entry name" value="Znf_AD"/>
</dbReference>
<dbReference type="InterPro" id="IPR036236">
    <property type="entry name" value="Znf_C2H2_sf"/>
</dbReference>
<dbReference type="InterPro" id="IPR013087">
    <property type="entry name" value="Znf_C2H2_type"/>
</dbReference>
<dbReference type="PANTHER" id="PTHR24394:SF29">
    <property type="entry name" value="MYONEURIN"/>
    <property type="match status" value="1"/>
</dbReference>
<dbReference type="PANTHER" id="PTHR24394">
    <property type="entry name" value="ZINC FINGER PROTEIN"/>
    <property type="match status" value="1"/>
</dbReference>
<dbReference type="Pfam" id="PF07776">
    <property type="entry name" value="zf-AD"/>
    <property type="match status" value="1"/>
</dbReference>
<dbReference type="Pfam" id="PF00096">
    <property type="entry name" value="zf-C2H2"/>
    <property type="match status" value="2"/>
</dbReference>
<dbReference type="Pfam" id="PF12874">
    <property type="entry name" value="zf-met"/>
    <property type="match status" value="1"/>
</dbReference>
<dbReference type="SMART" id="SM00868">
    <property type="entry name" value="zf-AD"/>
    <property type="match status" value="2"/>
</dbReference>
<dbReference type="SMART" id="SM00355">
    <property type="entry name" value="ZnF_C2H2"/>
    <property type="match status" value="5"/>
</dbReference>
<dbReference type="SUPFAM" id="SSF57667">
    <property type="entry name" value="beta-beta-alpha zinc fingers"/>
    <property type="match status" value="3"/>
</dbReference>
<dbReference type="SUPFAM" id="SSF57716">
    <property type="entry name" value="Glucocorticoid receptor-like (DNA-binding domain)"/>
    <property type="match status" value="1"/>
</dbReference>
<dbReference type="PROSITE" id="PS51915">
    <property type="entry name" value="ZAD"/>
    <property type="match status" value="1"/>
</dbReference>
<dbReference type="PROSITE" id="PS00028">
    <property type="entry name" value="ZINC_FINGER_C2H2_1"/>
    <property type="match status" value="4"/>
</dbReference>
<dbReference type="PROSITE" id="PS50157">
    <property type="entry name" value="ZINC_FINGER_C2H2_2"/>
    <property type="match status" value="5"/>
</dbReference>